<name>ADDA_STRT2</name>
<evidence type="ECO:0000255" key="1">
    <source>
        <dbReference type="HAMAP-Rule" id="MF_01451"/>
    </source>
</evidence>
<organism>
    <name type="scientific">Streptococcus thermophilus (strain ATCC BAA-250 / LMG 18311)</name>
    <dbReference type="NCBI Taxonomy" id="264199"/>
    <lineage>
        <taxon>Bacteria</taxon>
        <taxon>Bacillati</taxon>
        <taxon>Bacillota</taxon>
        <taxon>Bacilli</taxon>
        <taxon>Lactobacillales</taxon>
        <taxon>Streptococcaceae</taxon>
        <taxon>Streptococcus</taxon>
    </lineage>
</organism>
<gene>
    <name evidence="1" type="primary">addA</name>
    <name type="synonym">rexA</name>
    <name type="ordered locus">stu1716</name>
</gene>
<comment type="function">
    <text evidence="1">The heterodimer acts as both an ATP-dependent DNA helicase and an ATP-dependent, dual-direction single-stranded exonuclease. Recognizes the chi site generating a DNA molecule suitable for the initiation of homologous recombination. The AddA nuclease domain is required for chi fragment generation; this subunit has the helicase and 3' -&gt; 5' nuclease activities.</text>
</comment>
<comment type="catalytic activity">
    <reaction evidence="1">
        <text>Couples ATP hydrolysis with the unwinding of duplex DNA by translocating in the 3'-5' direction.</text>
        <dbReference type="EC" id="5.6.2.4"/>
    </reaction>
</comment>
<comment type="catalytic activity">
    <reaction evidence="1">
        <text>ATP + H2O = ADP + phosphate + H(+)</text>
        <dbReference type="Rhea" id="RHEA:13065"/>
        <dbReference type="ChEBI" id="CHEBI:15377"/>
        <dbReference type="ChEBI" id="CHEBI:15378"/>
        <dbReference type="ChEBI" id="CHEBI:30616"/>
        <dbReference type="ChEBI" id="CHEBI:43474"/>
        <dbReference type="ChEBI" id="CHEBI:456216"/>
        <dbReference type="EC" id="5.6.2.4"/>
    </reaction>
</comment>
<comment type="cofactor">
    <cofactor evidence="1">
        <name>Mg(2+)</name>
        <dbReference type="ChEBI" id="CHEBI:18420"/>
    </cofactor>
</comment>
<comment type="subunit">
    <text evidence="1">Heterodimer of AddA and AddB/RexB.</text>
</comment>
<comment type="similarity">
    <text evidence="1">Belongs to the helicase family. AddA subfamily.</text>
</comment>
<accession>Q5M2T7</accession>
<sequence length="1217" mass="138365">MLTKAFLSPAEIEERIAQEAASDKDRKLTPEQIEAIYSNGTNILVSASAGSGKTFVMVERILDMIGRGVGIDQLFISTFTVKAAGELKERLEKRLTKHLGQAETDEERAFLSDQIAKIGTADIGTMDAFTQKLVNQYGYLLGVSPTFRIMTDLAEQTLMKNEVYADLFNDYMQGKDAQLFQKLVRNFTGHSKTSKAFRDLVYDIYSFSQATADPEKWLCQNLLKGQIEAKPEQAKNELLDGLKDGLLADFLAFLRDHLGIAQREFAKAKYLNNVSDAIILLEGSLINDQTDMEDLLKQLLTLSGGTGLTNMTRPKDEELKAYKEAYNKTKNEFVAQLREVDTQLTVLEVLTKHNDDILPMLELLQSFVLDFSDQYLQAKIQENTFEFSDIAHFAIRILEENPEVAVSYRDRYHEVMVDEYQDNSHTQERMLELLSNGHNRFMVGDIKQSIYRFRQADPQIFNDKFQLFLENPDAGKLILLKENFRSQSEVLDATNGVFSHLMDQEIGDILYDKTHMLVAGSQKQKEPHPENETEVLIYNSDESSTSEDEEGPDQAISSGEISLVIKEIIKLHEQGVRFEDITLLAPNRNTYLDLMVSFEEHGIPLVPDEYKSSYLESLEVMIMLDTLRAINNPLNDYALVALLRSPMFNFNEDDLTRIAVQADKGQFYDKLLAAHTKSGLHPEVVMQGLEAKLTLFTETLADWRDYSKCHSIYDLIWKIYNDRFYYDYVGGLPRAEQRQANLYALALRANAYEKTGFKGLSRFIGMIDKIIASGNDLEEVTDLVPKNAVSLMTIHKSKGLEFKYVFVLQMNRKFIGHSKDGLSGKYIINREKGLGIKYLADLKDQINTNLPKLNVVLETLTFQENRREERRASISEEMRLLYVAMTRAEKKLYLVGKGSKETLTQQYGTDVENNRLPVALRDQIATYQDWIMALDTAFMRKDLKFTVRFVEDEELTPEAIGQVEVKAAVDADDLSNNRQTEEIERALTVLESVEKLNHLYAPAIDLPSVRTPSQLKTFYEPIMDTEGVDIMDKKEGVQPLETASTFELPDFGQKTKVTGAAVGSATHELMQRLTLSDTVTLQDLTQALSRVSASDQVKARVQLEKLLGFFDTELGKLILANRDKLRREAPFAMLAEDPASKEDFVVRGIIDGYLLLEDRIVLFDYKTDHFTHPSELKTRYQGQMSLYAKALSQAYQMEKVDKYLILLGGKDLEVVEV</sequence>
<reference key="1">
    <citation type="journal article" date="2004" name="Nat. Biotechnol.">
        <title>Complete sequence and comparative genome analysis of the dairy bacterium Streptococcus thermophilus.</title>
        <authorList>
            <person name="Bolotin A."/>
            <person name="Quinquis B."/>
            <person name="Renault P."/>
            <person name="Sorokin A."/>
            <person name="Ehrlich S.D."/>
            <person name="Kulakauskas S."/>
            <person name="Lapidus A."/>
            <person name="Goltsman E."/>
            <person name="Mazur M."/>
            <person name="Pusch G.D."/>
            <person name="Fonstein M."/>
            <person name="Overbeek R."/>
            <person name="Kyprides N."/>
            <person name="Purnelle B."/>
            <person name="Prozzi D."/>
            <person name="Ngui K."/>
            <person name="Masuy D."/>
            <person name="Hancy F."/>
            <person name="Burteau S."/>
            <person name="Boutry M."/>
            <person name="Delcour J."/>
            <person name="Goffeau A."/>
            <person name="Hols P."/>
        </authorList>
    </citation>
    <scope>NUCLEOTIDE SEQUENCE [LARGE SCALE GENOMIC DNA]</scope>
    <source>
        <strain>ATCC BAA-250 / LMG 18311</strain>
    </source>
</reference>
<protein>
    <recommendedName>
        <fullName evidence="1">ATP-dependent helicase/nuclease subunit A</fullName>
        <ecNumber evidence="1">3.1.-.-</ecNumber>
        <ecNumber evidence="1">5.6.2.4</ecNumber>
    </recommendedName>
    <alternativeName>
        <fullName evidence="1">ATP-dependent helicase/nuclease AddA</fullName>
    </alternativeName>
    <alternativeName>
        <fullName evidence="1">DNA 3'-5' helicase AddA</fullName>
    </alternativeName>
</protein>
<proteinExistence type="inferred from homology"/>
<feature type="chain" id="PRO_0000379354" description="ATP-dependent helicase/nuclease subunit A">
    <location>
        <begin position="1"/>
        <end position="1217"/>
    </location>
</feature>
<feature type="domain" description="UvrD-like helicase ATP-binding" evidence="1">
    <location>
        <begin position="26"/>
        <end position="487"/>
    </location>
</feature>
<feature type="domain" description="UvrD-like helicase C-terminal" evidence="1">
    <location>
        <begin position="515"/>
        <end position="799"/>
    </location>
</feature>
<feature type="binding site" evidence="1">
    <location>
        <begin position="47"/>
        <end position="54"/>
    </location>
    <ligand>
        <name>ATP</name>
        <dbReference type="ChEBI" id="CHEBI:30616"/>
    </ligand>
</feature>
<dbReference type="EC" id="3.1.-.-" evidence="1"/>
<dbReference type="EC" id="5.6.2.4" evidence="1"/>
<dbReference type="EMBL" id="CP000023">
    <property type="protein sequence ID" value="AAV61315.1"/>
    <property type="molecule type" value="Genomic_DNA"/>
</dbReference>
<dbReference type="RefSeq" id="WP_011226520.1">
    <property type="nucleotide sequence ID" value="NC_006448.1"/>
</dbReference>
<dbReference type="SMR" id="Q5M2T7"/>
<dbReference type="STRING" id="264199.stu1716"/>
<dbReference type="DNASU" id="3165569"/>
<dbReference type="KEGG" id="stl:stu1716"/>
<dbReference type="PATRIC" id="fig|264199.4.peg.1688"/>
<dbReference type="eggNOG" id="COG1074">
    <property type="taxonomic scope" value="Bacteria"/>
</dbReference>
<dbReference type="HOGENOM" id="CLU_001114_3_1_9"/>
<dbReference type="Proteomes" id="UP000001170">
    <property type="component" value="Chromosome"/>
</dbReference>
<dbReference type="GO" id="GO:0005829">
    <property type="term" value="C:cytosol"/>
    <property type="evidence" value="ECO:0007669"/>
    <property type="project" value="TreeGrafter"/>
</dbReference>
<dbReference type="GO" id="GO:0033202">
    <property type="term" value="C:DNA helicase complex"/>
    <property type="evidence" value="ECO:0007669"/>
    <property type="project" value="TreeGrafter"/>
</dbReference>
<dbReference type="GO" id="GO:0043138">
    <property type="term" value="F:3'-5' DNA helicase activity"/>
    <property type="evidence" value="ECO:0007669"/>
    <property type="project" value="UniProtKB-UniRule"/>
</dbReference>
<dbReference type="GO" id="GO:0008408">
    <property type="term" value="F:3'-5' exonuclease activity"/>
    <property type="evidence" value="ECO:0007669"/>
    <property type="project" value="UniProtKB-UniRule"/>
</dbReference>
<dbReference type="GO" id="GO:0005524">
    <property type="term" value="F:ATP binding"/>
    <property type="evidence" value="ECO:0007669"/>
    <property type="project" value="UniProtKB-UniRule"/>
</dbReference>
<dbReference type="GO" id="GO:0016887">
    <property type="term" value="F:ATP hydrolysis activity"/>
    <property type="evidence" value="ECO:0007669"/>
    <property type="project" value="RHEA"/>
</dbReference>
<dbReference type="GO" id="GO:0003690">
    <property type="term" value="F:double-stranded DNA binding"/>
    <property type="evidence" value="ECO:0007669"/>
    <property type="project" value="UniProtKB-UniRule"/>
</dbReference>
<dbReference type="GO" id="GO:0000724">
    <property type="term" value="P:double-strand break repair via homologous recombination"/>
    <property type="evidence" value="ECO:0007669"/>
    <property type="project" value="UniProtKB-UniRule"/>
</dbReference>
<dbReference type="CDD" id="cd17932">
    <property type="entry name" value="DEXQc_UvrD"/>
    <property type="match status" value="1"/>
</dbReference>
<dbReference type="Gene3D" id="3.90.320.10">
    <property type="match status" value="1"/>
</dbReference>
<dbReference type="Gene3D" id="3.40.50.300">
    <property type="entry name" value="P-loop containing nucleotide triphosphate hydrolases"/>
    <property type="match status" value="4"/>
</dbReference>
<dbReference type="Gene3D" id="1.10.486.10">
    <property type="entry name" value="PCRA, domain 4"/>
    <property type="match status" value="1"/>
</dbReference>
<dbReference type="HAMAP" id="MF_01451">
    <property type="entry name" value="AddA"/>
    <property type="match status" value="1"/>
</dbReference>
<dbReference type="InterPro" id="IPR014152">
    <property type="entry name" value="AddA"/>
</dbReference>
<dbReference type="InterPro" id="IPR014017">
    <property type="entry name" value="DNA_helicase_UvrD-like_C"/>
</dbReference>
<dbReference type="InterPro" id="IPR000212">
    <property type="entry name" value="DNA_helicase_UvrD/REP"/>
</dbReference>
<dbReference type="InterPro" id="IPR027417">
    <property type="entry name" value="P-loop_NTPase"/>
</dbReference>
<dbReference type="InterPro" id="IPR011604">
    <property type="entry name" value="PDDEXK-like_dom_sf"/>
</dbReference>
<dbReference type="InterPro" id="IPR038726">
    <property type="entry name" value="PDDEXK_AddAB-type"/>
</dbReference>
<dbReference type="InterPro" id="IPR011335">
    <property type="entry name" value="Restrct_endonuc-II-like"/>
</dbReference>
<dbReference type="InterPro" id="IPR014016">
    <property type="entry name" value="UvrD-like_ATP-bd"/>
</dbReference>
<dbReference type="NCBIfam" id="TIGR02785">
    <property type="entry name" value="addA_Gpos"/>
    <property type="match status" value="1"/>
</dbReference>
<dbReference type="PANTHER" id="PTHR11070:SF48">
    <property type="entry name" value="ATP-DEPENDENT HELICASE_NUCLEASE SUBUNIT A"/>
    <property type="match status" value="1"/>
</dbReference>
<dbReference type="PANTHER" id="PTHR11070">
    <property type="entry name" value="UVRD / RECB / PCRA DNA HELICASE FAMILY MEMBER"/>
    <property type="match status" value="1"/>
</dbReference>
<dbReference type="Pfam" id="PF12705">
    <property type="entry name" value="PDDEXK_1"/>
    <property type="match status" value="1"/>
</dbReference>
<dbReference type="Pfam" id="PF00580">
    <property type="entry name" value="UvrD-helicase"/>
    <property type="match status" value="1"/>
</dbReference>
<dbReference type="Pfam" id="PF13361">
    <property type="entry name" value="UvrD_C"/>
    <property type="match status" value="1"/>
</dbReference>
<dbReference type="SUPFAM" id="SSF52540">
    <property type="entry name" value="P-loop containing nucleoside triphosphate hydrolases"/>
    <property type="match status" value="1"/>
</dbReference>
<dbReference type="SUPFAM" id="SSF52980">
    <property type="entry name" value="Restriction endonuclease-like"/>
    <property type="match status" value="1"/>
</dbReference>
<dbReference type="PROSITE" id="PS51198">
    <property type="entry name" value="UVRD_HELICASE_ATP_BIND"/>
    <property type="match status" value="1"/>
</dbReference>
<dbReference type="PROSITE" id="PS51217">
    <property type="entry name" value="UVRD_HELICASE_CTER"/>
    <property type="match status" value="1"/>
</dbReference>
<keyword id="KW-0067">ATP-binding</keyword>
<keyword id="KW-0227">DNA damage</keyword>
<keyword id="KW-0234">DNA repair</keyword>
<keyword id="KW-0238">DNA-binding</keyword>
<keyword id="KW-0269">Exonuclease</keyword>
<keyword id="KW-0347">Helicase</keyword>
<keyword id="KW-0378">Hydrolase</keyword>
<keyword id="KW-0413">Isomerase</keyword>
<keyword id="KW-0540">Nuclease</keyword>
<keyword id="KW-0547">Nucleotide-binding</keyword>
<keyword id="KW-1185">Reference proteome</keyword>